<organism>
    <name type="scientific">Bacillus cereus (strain ATCC 10987 / NRS 248)</name>
    <dbReference type="NCBI Taxonomy" id="222523"/>
    <lineage>
        <taxon>Bacteria</taxon>
        <taxon>Bacillati</taxon>
        <taxon>Bacillota</taxon>
        <taxon>Bacilli</taxon>
        <taxon>Bacillales</taxon>
        <taxon>Bacillaceae</taxon>
        <taxon>Bacillus</taxon>
        <taxon>Bacillus cereus group</taxon>
    </lineage>
</organism>
<proteinExistence type="inferred from homology"/>
<accession>P62366</accession>
<keyword id="KW-0028">Amino-acid biosynthesis</keyword>
<keyword id="KW-0067">ATP-binding</keyword>
<keyword id="KW-0963">Cytoplasm</keyword>
<keyword id="KW-0328">Glycosyltransferase</keyword>
<keyword id="KW-0368">Histidine biosynthesis</keyword>
<keyword id="KW-0547">Nucleotide-binding</keyword>
<keyword id="KW-0808">Transferase</keyword>
<dbReference type="EC" id="2.4.2.17" evidence="1"/>
<dbReference type="EMBL" id="AE017194">
    <property type="protein sequence ID" value="AAS40454.1"/>
    <property type="molecule type" value="Genomic_DNA"/>
</dbReference>
<dbReference type="SMR" id="P62366"/>
<dbReference type="KEGG" id="bca:BCE_1525"/>
<dbReference type="HOGENOM" id="CLU_038115_2_0_9"/>
<dbReference type="UniPathway" id="UPA00031">
    <property type="reaction ID" value="UER00006"/>
</dbReference>
<dbReference type="Proteomes" id="UP000002527">
    <property type="component" value="Chromosome"/>
</dbReference>
<dbReference type="GO" id="GO:0005737">
    <property type="term" value="C:cytoplasm"/>
    <property type="evidence" value="ECO:0007669"/>
    <property type="project" value="UniProtKB-SubCell"/>
</dbReference>
<dbReference type="GO" id="GO:0005524">
    <property type="term" value="F:ATP binding"/>
    <property type="evidence" value="ECO:0007669"/>
    <property type="project" value="UniProtKB-KW"/>
</dbReference>
<dbReference type="GO" id="GO:0003879">
    <property type="term" value="F:ATP phosphoribosyltransferase activity"/>
    <property type="evidence" value="ECO:0007669"/>
    <property type="project" value="UniProtKB-UniRule"/>
</dbReference>
<dbReference type="GO" id="GO:0000105">
    <property type="term" value="P:L-histidine biosynthetic process"/>
    <property type="evidence" value="ECO:0007669"/>
    <property type="project" value="UniProtKB-UniRule"/>
</dbReference>
<dbReference type="CDD" id="cd13595">
    <property type="entry name" value="PBP2_HisGs"/>
    <property type="match status" value="1"/>
</dbReference>
<dbReference type="FunFam" id="3.40.190.10:FF:000011">
    <property type="entry name" value="ATP phosphoribosyltransferase"/>
    <property type="match status" value="1"/>
</dbReference>
<dbReference type="Gene3D" id="3.40.190.10">
    <property type="entry name" value="Periplasmic binding protein-like II"/>
    <property type="match status" value="2"/>
</dbReference>
<dbReference type="HAMAP" id="MF_01018">
    <property type="entry name" value="HisG_Short"/>
    <property type="match status" value="1"/>
</dbReference>
<dbReference type="InterPro" id="IPR013820">
    <property type="entry name" value="ATP_PRibTrfase_cat"/>
</dbReference>
<dbReference type="InterPro" id="IPR001348">
    <property type="entry name" value="ATP_PRibTrfase_HisG"/>
</dbReference>
<dbReference type="InterPro" id="IPR024893">
    <property type="entry name" value="ATP_PRibTrfase_HisG_short"/>
</dbReference>
<dbReference type="NCBIfam" id="TIGR00070">
    <property type="entry name" value="hisG"/>
    <property type="match status" value="1"/>
</dbReference>
<dbReference type="PANTHER" id="PTHR21403:SF8">
    <property type="entry name" value="ATP PHOSPHORIBOSYLTRANSFERASE"/>
    <property type="match status" value="1"/>
</dbReference>
<dbReference type="PANTHER" id="PTHR21403">
    <property type="entry name" value="ATP PHOSPHORIBOSYLTRANSFERASE ATP-PRTASE"/>
    <property type="match status" value="1"/>
</dbReference>
<dbReference type="Pfam" id="PF01634">
    <property type="entry name" value="HisG"/>
    <property type="match status" value="1"/>
</dbReference>
<dbReference type="SUPFAM" id="SSF53850">
    <property type="entry name" value="Periplasmic binding protein-like II"/>
    <property type="match status" value="1"/>
</dbReference>
<comment type="function">
    <text evidence="1">Catalyzes the condensation of ATP and 5-phosphoribose 1-diphosphate to form N'-(5'-phosphoribosyl)-ATP (PR-ATP). Has a crucial role in the pathway because the rate of histidine biosynthesis seems to be controlled primarily by regulation of HisG enzymatic activity.</text>
</comment>
<comment type="catalytic activity">
    <reaction evidence="1">
        <text>1-(5-phospho-beta-D-ribosyl)-ATP + diphosphate = 5-phospho-alpha-D-ribose 1-diphosphate + ATP</text>
        <dbReference type="Rhea" id="RHEA:18473"/>
        <dbReference type="ChEBI" id="CHEBI:30616"/>
        <dbReference type="ChEBI" id="CHEBI:33019"/>
        <dbReference type="ChEBI" id="CHEBI:58017"/>
        <dbReference type="ChEBI" id="CHEBI:73183"/>
        <dbReference type="EC" id="2.4.2.17"/>
    </reaction>
</comment>
<comment type="pathway">
    <text evidence="1">Amino-acid biosynthesis; L-histidine biosynthesis; L-histidine from 5-phospho-alpha-D-ribose 1-diphosphate: step 1/9.</text>
</comment>
<comment type="subunit">
    <text evidence="1">Heteromultimer composed of HisG and HisZ subunits.</text>
</comment>
<comment type="subcellular location">
    <subcellularLocation>
        <location evidence="1">Cytoplasm</location>
    </subcellularLocation>
</comment>
<comment type="domain">
    <text>Lacks the C-terminal regulatory region which is replaced by HisZ.</text>
</comment>
<comment type="similarity">
    <text evidence="1">Belongs to the ATP phosphoribosyltransferase family. Short subfamily.</text>
</comment>
<evidence type="ECO:0000255" key="1">
    <source>
        <dbReference type="HAMAP-Rule" id="MF_01018"/>
    </source>
</evidence>
<sequence>MRNIQIALTKGRLEKHVIPLFEQIGIDCSELKNKGRKLVFQSKNTDISFILVKAVDVATYVEHGVADIGVVGKDVLMENEKDIYEMLDLGVGVCKFCVASIPTYNPKSYRKKRIATKYPHITSNYFHDKGEDVEIIKIEGSVEIAPILGLVDAIVDIVETGKTLQENGLIVFEEMYSISARMIVNKAALKTKKDEIFSIINVMEQEILSGK</sequence>
<protein>
    <recommendedName>
        <fullName evidence="1">ATP phosphoribosyltransferase</fullName>
        <shortName evidence="1">ATP-PRT</shortName>
        <shortName evidence="1">ATP-PRTase</shortName>
        <ecNumber evidence="1">2.4.2.17</ecNumber>
    </recommendedName>
</protein>
<feature type="chain" id="PRO_0000151895" description="ATP phosphoribosyltransferase">
    <location>
        <begin position="1"/>
        <end position="211"/>
    </location>
</feature>
<reference key="1">
    <citation type="journal article" date="2004" name="Nucleic Acids Res.">
        <title>The genome sequence of Bacillus cereus ATCC 10987 reveals metabolic adaptations and a large plasmid related to Bacillus anthracis pXO1.</title>
        <authorList>
            <person name="Rasko D.A."/>
            <person name="Ravel J."/>
            <person name="Oekstad O.A."/>
            <person name="Helgason E."/>
            <person name="Cer R.Z."/>
            <person name="Jiang L."/>
            <person name="Shores K.A."/>
            <person name="Fouts D.E."/>
            <person name="Tourasse N.J."/>
            <person name="Angiuoli S.V."/>
            <person name="Kolonay J.F."/>
            <person name="Nelson W.C."/>
            <person name="Kolstoe A.-B."/>
            <person name="Fraser C.M."/>
            <person name="Read T.D."/>
        </authorList>
    </citation>
    <scope>NUCLEOTIDE SEQUENCE [LARGE SCALE GENOMIC DNA]</scope>
    <source>
        <strain>ATCC 10987 / NRS 248</strain>
    </source>
</reference>
<gene>
    <name evidence="1" type="primary">hisG</name>
    <name type="ordered locus">BCE_1525</name>
</gene>
<name>HIS1_BACC1</name>